<protein>
    <recommendedName>
        <fullName evidence="1">Ribosomal RNA small subunit methyltransferase H</fullName>
        <ecNumber evidence="1">2.1.1.199</ecNumber>
    </recommendedName>
    <alternativeName>
        <fullName evidence="1">16S rRNA m(4)C1402 methyltransferase</fullName>
    </alternativeName>
    <alternativeName>
        <fullName evidence="1">rRNA (cytosine-N(4)-)-methyltransferase RsmH</fullName>
    </alternativeName>
</protein>
<organism>
    <name type="scientific">Clostridium perfringens (strain 13 / Type A)</name>
    <dbReference type="NCBI Taxonomy" id="195102"/>
    <lineage>
        <taxon>Bacteria</taxon>
        <taxon>Bacillati</taxon>
        <taxon>Bacillota</taxon>
        <taxon>Clostridia</taxon>
        <taxon>Eubacteriales</taxon>
        <taxon>Clostridiaceae</taxon>
        <taxon>Clostridium</taxon>
    </lineage>
</organism>
<dbReference type="EC" id="2.1.1.199" evidence="1"/>
<dbReference type="EMBL" id="BA000016">
    <property type="protein sequence ID" value="BAB81571.1"/>
    <property type="molecule type" value="Genomic_DNA"/>
</dbReference>
<dbReference type="RefSeq" id="WP_011010646.1">
    <property type="nucleotide sequence ID" value="NC_003366.1"/>
</dbReference>
<dbReference type="SMR" id="Q8XJ96"/>
<dbReference type="STRING" id="195102.gene:10491129"/>
<dbReference type="KEGG" id="cpe:CPE1865"/>
<dbReference type="HOGENOM" id="CLU_038422_2_0_9"/>
<dbReference type="Proteomes" id="UP000000818">
    <property type="component" value="Chromosome"/>
</dbReference>
<dbReference type="GO" id="GO:0005737">
    <property type="term" value="C:cytoplasm"/>
    <property type="evidence" value="ECO:0007669"/>
    <property type="project" value="UniProtKB-SubCell"/>
</dbReference>
<dbReference type="GO" id="GO:0071424">
    <property type="term" value="F:rRNA (cytosine-N4-)-methyltransferase activity"/>
    <property type="evidence" value="ECO:0007669"/>
    <property type="project" value="UniProtKB-UniRule"/>
</dbReference>
<dbReference type="GO" id="GO:0070475">
    <property type="term" value="P:rRNA base methylation"/>
    <property type="evidence" value="ECO:0007669"/>
    <property type="project" value="UniProtKB-UniRule"/>
</dbReference>
<dbReference type="FunFam" id="1.10.150.170:FF:000001">
    <property type="entry name" value="Ribosomal RNA small subunit methyltransferase H"/>
    <property type="match status" value="1"/>
</dbReference>
<dbReference type="Gene3D" id="1.10.150.170">
    <property type="entry name" value="Putative methyltransferase TM0872, insert domain"/>
    <property type="match status" value="1"/>
</dbReference>
<dbReference type="Gene3D" id="3.40.50.150">
    <property type="entry name" value="Vaccinia Virus protein VP39"/>
    <property type="match status" value="1"/>
</dbReference>
<dbReference type="HAMAP" id="MF_01007">
    <property type="entry name" value="16SrRNA_methyltr_H"/>
    <property type="match status" value="1"/>
</dbReference>
<dbReference type="InterPro" id="IPR002903">
    <property type="entry name" value="RsmH"/>
</dbReference>
<dbReference type="InterPro" id="IPR023397">
    <property type="entry name" value="SAM-dep_MeTrfase_MraW_recog"/>
</dbReference>
<dbReference type="InterPro" id="IPR029063">
    <property type="entry name" value="SAM-dependent_MTases_sf"/>
</dbReference>
<dbReference type="NCBIfam" id="TIGR00006">
    <property type="entry name" value="16S rRNA (cytosine(1402)-N(4))-methyltransferase RsmH"/>
    <property type="match status" value="1"/>
</dbReference>
<dbReference type="PANTHER" id="PTHR11265:SF0">
    <property type="entry name" value="12S RRNA N4-METHYLCYTIDINE METHYLTRANSFERASE"/>
    <property type="match status" value="1"/>
</dbReference>
<dbReference type="PANTHER" id="PTHR11265">
    <property type="entry name" value="S-ADENOSYL-METHYLTRANSFERASE MRAW"/>
    <property type="match status" value="1"/>
</dbReference>
<dbReference type="Pfam" id="PF01795">
    <property type="entry name" value="Methyltransf_5"/>
    <property type="match status" value="1"/>
</dbReference>
<dbReference type="PIRSF" id="PIRSF004486">
    <property type="entry name" value="MraW"/>
    <property type="match status" value="1"/>
</dbReference>
<dbReference type="SUPFAM" id="SSF81799">
    <property type="entry name" value="Putative methyltransferase TM0872, insert domain"/>
    <property type="match status" value="1"/>
</dbReference>
<dbReference type="SUPFAM" id="SSF53335">
    <property type="entry name" value="S-adenosyl-L-methionine-dependent methyltransferases"/>
    <property type="match status" value="1"/>
</dbReference>
<name>RSMH_CLOPE</name>
<comment type="function">
    <text evidence="1">Specifically methylates the N4 position of cytidine in position 1402 (C1402) of 16S rRNA.</text>
</comment>
<comment type="catalytic activity">
    <reaction evidence="1">
        <text>cytidine(1402) in 16S rRNA + S-adenosyl-L-methionine = N(4)-methylcytidine(1402) in 16S rRNA + S-adenosyl-L-homocysteine + H(+)</text>
        <dbReference type="Rhea" id="RHEA:42928"/>
        <dbReference type="Rhea" id="RHEA-COMP:10286"/>
        <dbReference type="Rhea" id="RHEA-COMP:10287"/>
        <dbReference type="ChEBI" id="CHEBI:15378"/>
        <dbReference type="ChEBI" id="CHEBI:57856"/>
        <dbReference type="ChEBI" id="CHEBI:59789"/>
        <dbReference type="ChEBI" id="CHEBI:74506"/>
        <dbReference type="ChEBI" id="CHEBI:82748"/>
        <dbReference type="EC" id="2.1.1.199"/>
    </reaction>
</comment>
<comment type="subcellular location">
    <subcellularLocation>
        <location evidence="1">Cytoplasm</location>
    </subcellularLocation>
</comment>
<comment type="similarity">
    <text evidence="1">Belongs to the methyltransferase superfamily. RsmH family.</text>
</comment>
<sequence length="310" mass="35348">MEFKHVSVLLDECINALNIKEDGIYVDCTLGGAGHSSEIVKRLSSDGRLIRFDQDKDALKAAGERLKDYKNVTYVHSNFYAIYDVLTDLGIDGVDGILMDLGVSSYQLDNGERGFSYMQDAPLDMRMNRENEFSAYEIVNTYSEEELYRIIKEYGEEKFAKRIASFIVKNREEKNIETTLELVEIIKAAIPAKARREGPHPAKRTFQAIRIEVNKELEIISKTILDGVKKLNKGGRMAIITFHSLEDRIVKNTFKELANPCTCPSEFPVCVCNRKPEVKLISRKPIEASKEELEFNPRSRSAKLRIIEKL</sequence>
<feature type="chain" id="PRO_0000108611" description="Ribosomal RNA small subunit methyltransferase H">
    <location>
        <begin position="1"/>
        <end position="310"/>
    </location>
</feature>
<feature type="binding site" evidence="1">
    <location>
        <begin position="33"/>
        <end position="35"/>
    </location>
    <ligand>
        <name>S-adenosyl-L-methionine</name>
        <dbReference type="ChEBI" id="CHEBI:59789"/>
    </ligand>
</feature>
<feature type="binding site" evidence="1">
    <location>
        <position position="53"/>
    </location>
    <ligand>
        <name>S-adenosyl-L-methionine</name>
        <dbReference type="ChEBI" id="CHEBI:59789"/>
    </ligand>
</feature>
<feature type="binding site" evidence="1">
    <location>
        <position position="79"/>
    </location>
    <ligand>
        <name>S-adenosyl-L-methionine</name>
        <dbReference type="ChEBI" id="CHEBI:59789"/>
    </ligand>
</feature>
<feature type="binding site" evidence="1">
    <location>
        <position position="100"/>
    </location>
    <ligand>
        <name>S-adenosyl-L-methionine</name>
        <dbReference type="ChEBI" id="CHEBI:59789"/>
    </ligand>
</feature>
<feature type="binding site" evidence="1">
    <location>
        <position position="107"/>
    </location>
    <ligand>
        <name>S-adenosyl-L-methionine</name>
        <dbReference type="ChEBI" id="CHEBI:59789"/>
    </ligand>
</feature>
<gene>
    <name evidence="1" type="primary">rsmH</name>
    <name type="synonym">mraW</name>
    <name type="ordered locus">CPE1865</name>
</gene>
<reference key="1">
    <citation type="journal article" date="2002" name="Proc. Natl. Acad. Sci. U.S.A.">
        <title>Complete genome sequence of Clostridium perfringens, an anaerobic flesh-eater.</title>
        <authorList>
            <person name="Shimizu T."/>
            <person name="Ohtani K."/>
            <person name="Hirakawa H."/>
            <person name="Ohshima K."/>
            <person name="Yamashita A."/>
            <person name="Shiba T."/>
            <person name="Ogasawara N."/>
            <person name="Hattori M."/>
            <person name="Kuhara S."/>
            <person name="Hayashi H."/>
        </authorList>
    </citation>
    <scope>NUCLEOTIDE SEQUENCE [LARGE SCALE GENOMIC DNA]</scope>
    <source>
        <strain>13 / Type A</strain>
    </source>
</reference>
<proteinExistence type="inferred from homology"/>
<keyword id="KW-0963">Cytoplasm</keyword>
<keyword id="KW-0489">Methyltransferase</keyword>
<keyword id="KW-1185">Reference proteome</keyword>
<keyword id="KW-0698">rRNA processing</keyword>
<keyword id="KW-0949">S-adenosyl-L-methionine</keyword>
<keyword id="KW-0808">Transferase</keyword>
<accession>Q8XJ96</accession>
<evidence type="ECO:0000255" key="1">
    <source>
        <dbReference type="HAMAP-Rule" id="MF_01007"/>
    </source>
</evidence>